<keyword id="KW-0028">Amino-acid biosynthesis</keyword>
<keyword id="KW-0378">Hydrolase</keyword>
<keyword id="KW-0460">Magnesium</keyword>
<keyword id="KW-0479">Metal-binding</keyword>
<keyword id="KW-1185">Reference proteome</keyword>
<keyword id="KW-0718">Serine biosynthesis</keyword>
<organism evidence="7">
    <name type="scientific">Pseudomonas syringae pv. tomato (strain ATCC BAA-871 / DC3000)</name>
    <dbReference type="NCBI Taxonomy" id="223283"/>
    <lineage>
        <taxon>Bacteria</taxon>
        <taxon>Pseudomonadati</taxon>
        <taxon>Pseudomonadota</taxon>
        <taxon>Gammaproteobacteria</taxon>
        <taxon>Pseudomonadales</taxon>
        <taxon>Pseudomonadaceae</taxon>
        <taxon>Pseudomonas</taxon>
    </lineage>
</organism>
<feature type="chain" id="PRO_0000435469" description="Phosphoserine phosphatase" evidence="4">
    <location>
        <begin position="1"/>
        <end position="237"/>
    </location>
</feature>
<feature type="active site" description="Nucleophile" evidence="2">
    <location>
        <position position="39"/>
    </location>
</feature>
<feature type="active site" description="Proton donor" evidence="2">
    <location>
        <position position="41"/>
    </location>
</feature>
<feature type="binding site" evidence="2">
    <location>
        <position position="39"/>
    </location>
    <ligand>
        <name>Mg(2+)</name>
        <dbReference type="ChEBI" id="CHEBI:18420"/>
    </ligand>
</feature>
<feature type="binding site" evidence="2">
    <location>
        <position position="41"/>
    </location>
    <ligand>
        <name>Mg(2+)</name>
        <dbReference type="ChEBI" id="CHEBI:18420"/>
    </ligand>
</feature>
<feature type="binding site" evidence="1">
    <location>
        <position position="47"/>
    </location>
    <ligand>
        <name>substrate</name>
    </ligand>
</feature>
<feature type="binding site" evidence="1">
    <location>
        <position position="78"/>
    </location>
    <ligand>
        <name>substrate</name>
    </ligand>
</feature>
<feature type="binding site" evidence="1">
    <location>
        <begin position="122"/>
        <end position="123"/>
    </location>
    <ligand>
        <name>substrate</name>
    </ligand>
</feature>
<feature type="binding site" evidence="1">
    <location>
        <position position="165"/>
    </location>
    <ligand>
        <name>substrate</name>
    </ligand>
</feature>
<feature type="binding site" evidence="2">
    <location>
        <position position="184"/>
    </location>
    <ligand>
        <name>Mg(2+)</name>
        <dbReference type="ChEBI" id="CHEBI:18420"/>
    </ligand>
</feature>
<feature type="binding site" evidence="1">
    <location>
        <position position="187"/>
    </location>
    <ligand>
        <name>substrate</name>
    </ligand>
</feature>
<comment type="function">
    <text evidence="3">Phosphoserine phosphatase that mediates dephosphorylation of phosphoserine in the serine biosynthesis pathway. Also able to dephosphorylate phospho-threonine (PubMed:25848029).</text>
</comment>
<comment type="catalytic activity">
    <reaction evidence="3">
        <text>O-phospho-L-serine + H2O = L-serine + phosphate</text>
        <dbReference type="Rhea" id="RHEA:21208"/>
        <dbReference type="ChEBI" id="CHEBI:15377"/>
        <dbReference type="ChEBI" id="CHEBI:33384"/>
        <dbReference type="ChEBI" id="CHEBI:43474"/>
        <dbReference type="ChEBI" id="CHEBI:57524"/>
        <dbReference type="EC" id="3.1.3.3"/>
    </reaction>
</comment>
<comment type="catalytic activity">
    <reaction evidence="3">
        <text>O-phospho-D-serine + H2O = D-serine + phosphate</text>
        <dbReference type="Rhea" id="RHEA:24873"/>
        <dbReference type="ChEBI" id="CHEBI:15377"/>
        <dbReference type="ChEBI" id="CHEBI:35247"/>
        <dbReference type="ChEBI" id="CHEBI:43474"/>
        <dbReference type="ChEBI" id="CHEBI:58680"/>
        <dbReference type="EC" id="3.1.3.3"/>
    </reaction>
</comment>
<comment type="cofactor">
    <cofactor evidence="3">
        <name>Mg(2+)</name>
        <dbReference type="ChEBI" id="CHEBI:18420"/>
    </cofactor>
    <text evidence="2">Binds 1 Mg(2+) ion per subunit.</text>
</comment>
<comment type="pathway">
    <text evidence="4">Amino-acid biosynthesis; L-serine biosynthesis; L-serine from 3-phospho-D-glycerate: step 3/3.</text>
</comment>
<comment type="similarity">
    <text evidence="4">Belongs to the thrH family.</text>
</comment>
<sequence>MAAMVTKSAVQWPLPEARVPLPLILNAVGECAVEIACLDLEGVLVPEIWIAFAEKTGIESLRATTRDIPDYDVLMKQRLRILDEHGLKLADIQAVISTLKPLEGAVEFVDWLRERFQVVILSDTFYEFSQPLMRQLGFPTLLCHRLITDETDRVVSYQLRQKDPKRQSVLAFKSLYYRIIAAGDSYNDTTMLGEADAGILFHAPDNVIREFPQFPAVHTFDELKKEFIKASNRELVL</sequence>
<accession>Q883R9</accession>
<proteinExistence type="evidence at protein level"/>
<protein>
    <recommendedName>
        <fullName evidence="5">Phosphoserine phosphatase</fullName>
        <shortName evidence="2">PSP</shortName>
        <shortName evidence="2">PSPase</shortName>
        <ecNumber evidence="3">3.1.3.3</ecNumber>
    </recommendedName>
</protein>
<reference evidence="7" key="1">
    <citation type="journal article" date="2003" name="Proc. Natl. Acad. Sci. U.S.A.">
        <title>The complete genome sequence of the Arabidopsis and tomato pathogen Pseudomonas syringae pv. tomato DC3000.</title>
        <authorList>
            <person name="Buell C.R."/>
            <person name="Joardar V."/>
            <person name="Lindeberg M."/>
            <person name="Selengut J."/>
            <person name="Paulsen I.T."/>
            <person name="Gwinn M.L."/>
            <person name="Dodson R.J."/>
            <person name="DeBoy R.T."/>
            <person name="Durkin A.S."/>
            <person name="Kolonay J.F."/>
            <person name="Madupu R."/>
            <person name="Daugherty S.C."/>
            <person name="Brinkac L.M."/>
            <person name="Beanan M.J."/>
            <person name="Haft D.H."/>
            <person name="Nelson W.C."/>
            <person name="Davidsen T.M."/>
            <person name="Zafar N."/>
            <person name="Zhou L."/>
            <person name="Liu J."/>
            <person name="Yuan Q."/>
            <person name="Khouri H.M."/>
            <person name="Fedorova N.B."/>
            <person name="Tran B."/>
            <person name="Russell D."/>
            <person name="Berry K.J."/>
            <person name="Utterback T.R."/>
            <person name="Van Aken S.E."/>
            <person name="Feldblyum T.V."/>
            <person name="D'Ascenzo M."/>
            <person name="Deng W.-L."/>
            <person name="Ramos A.R."/>
            <person name="Alfano J.R."/>
            <person name="Cartinhour S."/>
            <person name="Chatterjee A.K."/>
            <person name="Delaney T.P."/>
            <person name="Lazarowitz S.G."/>
            <person name="Martin G.B."/>
            <person name="Schneider D.J."/>
            <person name="Tang X."/>
            <person name="Bender C.L."/>
            <person name="White O."/>
            <person name="Fraser C.M."/>
            <person name="Collmer A."/>
        </authorList>
    </citation>
    <scope>NUCLEOTIDE SEQUENCE [LARGE SCALE GENOMIC DNA]</scope>
    <source>
        <strain evidence="6 7">ATCC BAA-871 / DC3000</strain>
    </source>
</reference>
<reference evidence="4" key="2">
    <citation type="journal article" date="2015" name="Proc. Natl. Acad. Sci. U.S.A.">
        <title>Panoramic view of a superfamily of phosphatases through substrate profiling.</title>
        <authorList>
            <person name="Huang H."/>
            <person name="Pandya C."/>
            <person name="Liu C."/>
            <person name="Al-Obaidi N.F."/>
            <person name="Wang M."/>
            <person name="Zheng L."/>
            <person name="Toews Keating S."/>
            <person name="Aono M."/>
            <person name="Love J.D."/>
            <person name="Evans B."/>
            <person name="Seidel R.D."/>
            <person name="Hillerich B.S."/>
            <person name="Garforth S.J."/>
            <person name="Almo S.C."/>
            <person name="Mariano P.S."/>
            <person name="Dunaway-Mariano D."/>
            <person name="Allen K.N."/>
            <person name="Farelli J.D."/>
        </authorList>
    </citation>
    <scope>FUNCTION</scope>
    <scope>CATALYTIC ACTIVITY</scope>
    <scope>COFACTOR</scope>
</reference>
<gene>
    <name evidence="6" type="ordered locus">PSPTO_2281</name>
</gene>
<name>THRH_PSESM</name>
<dbReference type="EC" id="3.1.3.3" evidence="3"/>
<dbReference type="EMBL" id="AE016853">
    <property type="protein sequence ID" value="AAO55795.1"/>
    <property type="molecule type" value="Genomic_DNA"/>
</dbReference>
<dbReference type="RefSeq" id="NP_792100.1">
    <property type="nucleotide sequence ID" value="NC_004578.1"/>
</dbReference>
<dbReference type="SMR" id="Q883R9"/>
<dbReference type="STRING" id="223283.PSPTO_2281"/>
<dbReference type="DNASU" id="1183932"/>
<dbReference type="KEGG" id="pst:PSPTO_2281"/>
<dbReference type="PATRIC" id="fig|223283.9.peg.2315"/>
<dbReference type="eggNOG" id="COG0560">
    <property type="taxonomic scope" value="Bacteria"/>
</dbReference>
<dbReference type="HOGENOM" id="CLU_097498_0_0_6"/>
<dbReference type="OrthoDB" id="9801134at2"/>
<dbReference type="PhylomeDB" id="Q883R9"/>
<dbReference type="UniPathway" id="UPA00135">
    <property type="reaction ID" value="UER00198"/>
</dbReference>
<dbReference type="Proteomes" id="UP000002515">
    <property type="component" value="Chromosome"/>
</dbReference>
<dbReference type="GO" id="GO:0005737">
    <property type="term" value="C:cytoplasm"/>
    <property type="evidence" value="ECO:0007669"/>
    <property type="project" value="TreeGrafter"/>
</dbReference>
<dbReference type="GO" id="GO:0036424">
    <property type="term" value="F:L-phosphoserine phosphatase activity"/>
    <property type="evidence" value="ECO:0007669"/>
    <property type="project" value="TreeGrafter"/>
</dbReference>
<dbReference type="GO" id="GO:0000287">
    <property type="term" value="F:magnesium ion binding"/>
    <property type="evidence" value="ECO:0007669"/>
    <property type="project" value="TreeGrafter"/>
</dbReference>
<dbReference type="GO" id="GO:0006564">
    <property type="term" value="P:L-serine biosynthetic process"/>
    <property type="evidence" value="ECO:0007669"/>
    <property type="project" value="UniProtKB-KW"/>
</dbReference>
<dbReference type="Gene3D" id="3.40.50.1000">
    <property type="entry name" value="HAD superfamily/HAD-like"/>
    <property type="match status" value="1"/>
</dbReference>
<dbReference type="Gene3D" id="3.90.1470.10">
    <property type="entry name" value="thrh gene product, domain 2"/>
    <property type="match status" value="1"/>
</dbReference>
<dbReference type="InterPro" id="IPR050582">
    <property type="entry name" value="HAD-like_SerB"/>
</dbReference>
<dbReference type="InterPro" id="IPR036412">
    <property type="entry name" value="HAD-like_sf"/>
</dbReference>
<dbReference type="InterPro" id="IPR023214">
    <property type="entry name" value="HAD_sf"/>
</dbReference>
<dbReference type="InterPro" id="IPR011863">
    <property type="entry name" value="HSK-PSP"/>
</dbReference>
<dbReference type="NCBIfam" id="TIGR02137">
    <property type="entry name" value="HSK-PSP"/>
    <property type="match status" value="1"/>
</dbReference>
<dbReference type="NCBIfam" id="NF010109">
    <property type="entry name" value="PRK13582.1"/>
    <property type="match status" value="1"/>
</dbReference>
<dbReference type="PANTHER" id="PTHR43344">
    <property type="entry name" value="PHOSPHOSERINE PHOSPHATASE"/>
    <property type="match status" value="1"/>
</dbReference>
<dbReference type="PANTHER" id="PTHR43344:SF2">
    <property type="entry name" value="PHOSPHOSERINE PHOSPHATASE"/>
    <property type="match status" value="1"/>
</dbReference>
<dbReference type="Pfam" id="PF00702">
    <property type="entry name" value="Hydrolase"/>
    <property type="match status" value="1"/>
</dbReference>
<dbReference type="SUPFAM" id="SSF56784">
    <property type="entry name" value="HAD-like"/>
    <property type="match status" value="1"/>
</dbReference>
<evidence type="ECO:0000250" key="1">
    <source>
        <dbReference type="UniProtKB" id="Q58989"/>
    </source>
</evidence>
<evidence type="ECO:0000250" key="2">
    <source>
        <dbReference type="UniProtKB" id="Q9I2Y2"/>
    </source>
</evidence>
<evidence type="ECO:0000269" key="3">
    <source>
    </source>
</evidence>
<evidence type="ECO:0000305" key="4"/>
<evidence type="ECO:0000305" key="5">
    <source>
    </source>
</evidence>
<evidence type="ECO:0000312" key="6">
    <source>
        <dbReference type="EMBL" id="AAO55795.1"/>
    </source>
</evidence>
<evidence type="ECO:0000312" key="7">
    <source>
        <dbReference type="Proteomes" id="UP000002515"/>
    </source>
</evidence>